<evidence type="ECO:0000250" key="1">
    <source>
        <dbReference type="UniProtKB" id="G3H0N9"/>
    </source>
</evidence>
<evidence type="ECO:0000250" key="2">
    <source>
        <dbReference type="UniProtKB" id="Q9UBS3"/>
    </source>
</evidence>
<evidence type="ECO:0000255" key="3"/>
<evidence type="ECO:0000255" key="4">
    <source>
        <dbReference type="PROSITE-ProRule" id="PRU00286"/>
    </source>
</evidence>
<evidence type="ECO:0000269" key="5">
    <source>
    </source>
</evidence>
<evidence type="ECO:0000269" key="6">
    <source>
    </source>
</evidence>
<evidence type="ECO:0000269" key="7">
    <source>
    </source>
</evidence>
<evidence type="ECO:0000269" key="8">
    <source>
    </source>
</evidence>
<evidence type="ECO:0000269" key="9">
    <source>
    </source>
</evidence>
<evidence type="ECO:0000303" key="10">
    <source>
    </source>
</evidence>
<evidence type="ECO:0000303" key="11">
    <source>
    </source>
</evidence>
<evidence type="ECO:0000305" key="12"/>
<evidence type="ECO:0000305" key="13">
    <source>
    </source>
</evidence>
<evidence type="ECO:0000312" key="14">
    <source>
        <dbReference type="MGI" id="MGI:1351618"/>
    </source>
</evidence>
<dbReference type="EMBL" id="AB028857">
    <property type="protein sequence ID" value="BAA88305.1"/>
    <property type="molecule type" value="mRNA"/>
</dbReference>
<dbReference type="EMBL" id="AK005475">
    <property type="protein sequence ID" value="BAB24065.1"/>
    <property type="molecule type" value="mRNA"/>
</dbReference>
<dbReference type="EMBL" id="CT010304">
    <property type="protein sequence ID" value="CAJ18512.1"/>
    <property type="molecule type" value="mRNA"/>
</dbReference>
<dbReference type="EMBL" id="CT010444">
    <property type="status" value="NOT_ANNOTATED_CDS"/>
    <property type="molecule type" value="Genomic_DNA"/>
</dbReference>
<dbReference type="EMBL" id="BC042713">
    <property type="protein sequence ID" value="AAH42713.1"/>
    <property type="molecule type" value="mRNA"/>
</dbReference>
<dbReference type="EMBL" id="BC096676">
    <property type="protein sequence ID" value="AAH96676.1"/>
    <property type="molecule type" value="mRNA"/>
</dbReference>
<dbReference type="CCDS" id="CCDS25897.1"/>
<dbReference type="RefSeq" id="NP_038788.2">
    <property type="nucleotide sequence ID" value="NM_013760.4"/>
</dbReference>
<dbReference type="SMR" id="Q9QYI6"/>
<dbReference type="BioGRID" id="205171">
    <property type="interactions" value="3"/>
</dbReference>
<dbReference type="FunCoup" id="Q9QYI6">
    <property type="interactions" value="1181"/>
</dbReference>
<dbReference type="STRING" id="10090.ENSMUSP00000015049"/>
<dbReference type="iPTMnet" id="Q9QYI6"/>
<dbReference type="PhosphoSitePlus" id="Q9QYI6"/>
<dbReference type="jPOST" id="Q9QYI6"/>
<dbReference type="PaxDb" id="10090-ENSMUSP00000015049"/>
<dbReference type="PeptideAtlas" id="Q9QYI6"/>
<dbReference type="ProteomicsDB" id="277351"/>
<dbReference type="Pumba" id="Q9QYI6"/>
<dbReference type="Antibodypedia" id="31469">
    <property type="antibodies" value="233 antibodies from 31 providers"/>
</dbReference>
<dbReference type="DNASU" id="27362"/>
<dbReference type="Ensembl" id="ENSMUST00000015049.5">
    <property type="protein sequence ID" value="ENSMUSP00000015049.4"/>
    <property type="gene ID" value="ENSMUSG00000014905.5"/>
</dbReference>
<dbReference type="GeneID" id="27362"/>
<dbReference type="KEGG" id="mmu:27362"/>
<dbReference type="UCSC" id="uc007nlo.1">
    <property type="organism name" value="mouse"/>
</dbReference>
<dbReference type="AGR" id="MGI:1351618"/>
<dbReference type="CTD" id="4189"/>
<dbReference type="MGI" id="MGI:1351618">
    <property type="gene designation" value="Dnajb9"/>
</dbReference>
<dbReference type="VEuPathDB" id="HostDB:ENSMUSG00000014905"/>
<dbReference type="eggNOG" id="KOG0714">
    <property type="taxonomic scope" value="Eukaryota"/>
</dbReference>
<dbReference type="GeneTree" id="ENSGT00940000156246"/>
<dbReference type="HOGENOM" id="CLU_077239_0_0_1"/>
<dbReference type="InParanoid" id="Q9QYI6"/>
<dbReference type="OMA" id="YNFRQHY"/>
<dbReference type="OrthoDB" id="376357at2759"/>
<dbReference type="PhylomeDB" id="Q9QYI6"/>
<dbReference type="TreeFam" id="TF105143"/>
<dbReference type="BioGRID-ORCS" id="27362">
    <property type="hits" value="6 hits in 79 CRISPR screens"/>
</dbReference>
<dbReference type="ChiTaRS" id="Dnajb9">
    <property type="organism name" value="mouse"/>
</dbReference>
<dbReference type="PRO" id="PR:Q9QYI6"/>
<dbReference type="Proteomes" id="UP000000589">
    <property type="component" value="Chromosome 12"/>
</dbReference>
<dbReference type="RNAct" id="Q9QYI6">
    <property type="molecule type" value="protein"/>
</dbReference>
<dbReference type="Bgee" id="ENSMUSG00000014905">
    <property type="expression patterns" value="Expressed in seminal vesicle and 266 other cell types or tissues"/>
</dbReference>
<dbReference type="ExpressionAtlas" id="Q9QYI6">
    <property type="expression patterns" value="baseline and differential"/>
</dbReference>
<dbReference type="GO" id="GO:0005783">
    <property type="term" value="C:endoplasmic reticulum"/>
    <property type="evidence" value="ECO:0000314"/>
    <property type="project" value="UniProtKB"/>
</dbReference>
<dbReference type="GO" id="GO:0005788">
    <property type="term" value="C:endoplasmic reticulum lumen"/>
    <property type="evidence" value="ECO:0000314"/>
    <property type="project" value="UniProtKB"/>
</dbReference>
<dbReference type="GO" id="GO:0030544">
    <property type="term" value="F:Hsp70 protein binding"/>
    <property type="evidence" value="ECO:0000353"/>
    <property type="project" value="UniProtKB"/>
</dbReference>
<dbReference type="GO" id="GO:0051787">
    <property type="term" value="F:misfolded protein binding"/>
    <property type="evidence" value="ECO:0007669"/>
    <property type="project" value="Ensembl"/>
</dbReference>
<dbReference type="GO" id="GO:0051087">
    <property type="term" value="F:protein-folding chaperone binding"/>
    <property type="evidence" value="ECO:0000314"/>
    <property type="project" value="UniProtKB"/>
</dbReference>
<dbReference type="GO" id="GO:0030183">
    <property type="term" value="P:B cell differentiation"/>
    <property type="evidence" value="ECO:0000315"/>
    <property type="project" value="UniProtKB"/>
</dbReference>
<dbReference type="GO" id="GO:0036503">
    <property type="term" value="P:ERAD pathway"/>
    <property type="evidence" value="ECO:0000314"/>
    <property type="project" value="UniProtKB"/>
</dbReference>
<dbReference type="GO" id="GO:1903895">
    <property type="term" value="P:negative regulation of IRE1-mediated unfolded protein response"/>
    <property type="evidence" value="ECO:0000250"/>
    <property type="project" value="UniProtKB"/>
</dbReference>
<dbReference type="GO" id="GO:0002639">
    <property type="term" value="P:positive regulation of immunoglobulin production"/>
    <property type="evidence" value="ECO:0000315"/>
    <property type="project" value="UniProtKB"/>
</dbReference>
<dbReference type="GO" id="GO:0034976">
    <property type="term" value="P:response to endoplasmic reticulum stress"/>
    <property type="evidence" value="ECO:0000314"/>
    <property type="project" value="UniProtKB"/>
</dbReference>
<dbReference type="GO" id="GO:0006986">
    <property type="term" value="P:response to unfolded protein"/>
    <property type="evidence" value="ECO:0007669"/>
    <property type="project" value="UniProtKB-KW"/>
</dbReference>
<dbReference type="CDD" id="cd06257">
    <property type="entry name" value="DnaJ"/>
    <property type="match status" value="1"/>
</dbReference>
<dbReference type="FunFam" id="1.10.287.110:FF:000054">
    <property type="entry name" value="dnaJ homolog subfamily B member 9"/>
    <property type="match status" value="1"/>
</dbReference>
<dbReference type="Gene3D" id="1.10.287.110">
    <property type="entry name" value="DnaJ domain"/>
    <property type="match status" value="1"/>
</dbReference>
<dbReference type="InterPro" id="IPR001623">
    <property type="entry name" value="DnaJ_domain"/>
</dbReference>
<dbReference type="InterPro" id="IPR018253">
    <property type="entry name" value="DnaJ_domain_CS"/>
</dbReference>
<dbReference type="InterPro" id="IPR051948">
    <property type="entry name" value="Hsp70_co-chaperone_J-domain"/>
</dbReference>
<dbReference type="InterPro" id="IPR036869">
    <property type="entry name" value="J_dom_sf"/>
</dbReference>
<dbReference type="PANTHER" id="PTHR44360">
    <property type="entry name" value="DNAJ HOMOLOG SUBFAMILY B MEMBER 9"/>
    <property type="match status" value="1"/>
</dbReference>
<dbReference type="PANTHER" id="PTHR44360:SF1">
    <property type="entry name" value="DNAJ HOMOLOG SUBFAMILY B MEMBER 9"/>
    <property type="match status" value="1"/>
</dbReference>
<dbReference type="Pfam" id="PF00226">
    <property type="entry name" value="DnaJ"/>
    <property type="match status" value="1"/>
</dbReference>
<dbReference type="PRINTS" id="PR00625">
    <property type="entry name" value="JDOMAIN"/>
</dbReference>
<dbReference type="SMART" id="SM00271">
    <property type="entry name" value="DnaJ"/>
    <property type="match status" value="1"/>
</dbReference>
<dbReference type="SUPFAM" id="SSF46565">
    <property type="entry name" value="Chaperone J-domain"/>
    <property type="match status" value="1"/>
</dbReference>
<dbReference type="PROSITE" id="PS00636">
    <property type="entry name" value="DNAJ_1"/>
    <property type="match status" value="1"/>
</dbReference>
<dbReference type="PROSITE" id="PS50076">
    <property type="entry name" value="DNAJ_2"/>
    <property type="match status" value="1"/>
</dbReference>
<organism>
    <name type="scientific">Mus musculus</name>
    <name type="common">Mouse</name>
    <dbReference type="NCBI Taxonomy" id="10090"/>
    <lineage>
        <taxon>Eukaryota</taxon>
        <taxon>Metazoa</taxon>
        <taxon>Chordata</taxon>
        <taxon>Craniata</taxon>
        <taxon>Vertebrata</taxon>
        <taxon>Euteleostomi</taxon>
        <taxon>Mammalia</taxon>
        <taxon>Eutheria</taxon>
        <taxon>Euarchontoglires</taxon>
        <taxon>Glires</taxon>
        <taxon>Rodentia</taxon>
        <taxon>Myomorpha</taxon>
        <taxon>Muroidea</taxon>
        <taxon>Muridae</taxon>
        <taxon>Murinae</taxon>
        <taxon>Mus</taxon>
        <taxon>Mus</taxon>
    </lineage>
</organism>
<keyword id="KW-0143">Chaperone</keyword>
<keyword id="KW-0256">Endoplasmic reticulum</keyword>
<keyword id="KW-0597">Phosphoprotein</keyword>
<keyword id="KW-1185">Reference proteome</keyword>
<keyword id="KW-0732">Signal</keyword>
<keyword id="KW-0834">Unfolded protein response</keyword>
<gene>
    <name evidence="14" type="primary">Dnajb9</name>
</gene>
<reference key="1">
    <citation type="journal article" date="2000" name="Cell Stress Chaperones">
        <title>Mammalian HSP40/DNAJ homologs: cloning of novel cDNAs and a proposal for their classification and nomenclature.</title>
        <authorList>
            <person name="Ohtsuka K."/>
            <person name="Hata M."/>
        </authorList>
    </citation>
    <scope>NUCLEOTIDE SEQUENCE [MRNA]</scope>
    <source>
        <strain>C57BL/6J</strain>
    </source>
</reference>
<reference key="2">
    <citation type="journal article" date="2005" name="Science">
        <title>The transcriptional landscape of the mammalian genome.</title>
        <authorList>
            <person name="Carninci P."/>
            <person name="Kasukawa T."/>
            <person name="Katayama S."/>
            <person name="Gough J."/>
            <person name="Frith M.C."/>
            <person name="Maeda N."/>
            <person name="Oyama R."/>
            <person name="Ravasi T."/>
            <person name="Lenhard B."/>
            <person name="Wells C."/>
            <person name="Kodzius R."/>
            <person name="Shimokawa K."/>
            <person name="Bajic V.B."/>
            <person name="Brenner S.E."/>
            <person name="Batalov S."/>
            <person name="Forrest A.R."/>
            <person name="Zavolan M."/>
            <person name="Davis M.J."/>
            <person name="Wilming L.G."/>
            <person name="Aidinis V."/>
            <person name="Allen J.E."/>
            <person name="Ambesi-Impiombato A."/>
            <person name="Apweiler R."/>
            <person name="Aturaliya R.N."/>
            <person name="Bailey T.L."/>
            <person name="Bansal M."/>
            <person name="Baxter L."/>
            <person name="Beisel K.W."/>
            <person name="Bersano T."/>
            <person name="Bono H."/>
            <person name="Chalk A.M."/>
            <person name="Chiu K.P."/>
            <person name="Choudhary V."/>
            <person name="Christoffels A."/>
            <person name="Clutterbuck D.R."/>
            <person name="Crowe M.L."/>
            <person name="Dalla E."/>
            <person name="Dalrymple B.P."/>
            <person name="de Bono B."/>
            <person name="Della Gatta G."/>
            <person name="di Bernardo D."/>
            <person name="Down T."/>
            <person name="Engstrom P."/>
            <person name="Fagiolini M."/>
            <person name="Faulkner G."/>
            <person name="Fletcher C.F."/>
            <person name="Fukushima T."/>
            <person name="Furuno M."/>
            <person name="Futaki S."/>
            <person name="Gariboldi M."/>
            <person name="Georgii-Hemming P."/>
            <person name="Gingeras T.R."/>
            <person name="Gojobori T."/>
            <person name="Green R.E."/>
            <person name="Gustincich S."/>
            <person name="Harbers M."/>
            <person name="Hayashi Y."/>
            <person name="Hensch T.K."/>
            <person name="Hirokawa N."/>
            <person name="Hill D."/>
            <person name="Huminiecki L."/>
            <person name="Iacono M."/>
            <person name="Ikeo K."/>
            <person name="Iwama A."/>
            <person name="Ishikawa T."/>
            <person name="Jakt M."/>
            <person name="Kanapin A."/>
            <person name="Katoh M."/>
            <person name="Kawasawa Y."/>
            <person name="Kelso J."/>
            <person name="Kitamura H."/>
            <person name="Kitano H."/>
            <person name="Kollias G."/>
            <person name="Krishnan S.P."/>
            <person name="Kruger A."/>
            <person name="Kummerfeld S.K."/>
            <person name="Kurochkin I.V."/>
            <person name="Lareau L.F."/>
            <person name="Lazarevic D."/>
            <person name="Lipovich L."/>
            <person name="Liu J."/>
            <person name="Liuni S."/>
            <person name="McWilliam S."/>
            <person name="Madan Babu M."/>
            <person name="Madera M."/>
            <person name="Marchionni L."/>
            <person name="Matsuda H."/>
            <person name="Matsuzawa S."/>
            <person name="Miki H."/>
            <person name="Mignone F."/>
            <person name="Miyake S."/>
            <person name="Morris K."/>
            <person name="Mottagui-Tabar S."/>
            <person name="Mulder N."/>
            <person name="Nakano N."/>
            <person name="Nakauchi H."/>
            <person name="Ng P."/>
            <person name="Nilsson R."/>
            <person name="Nishiguchi S."/>
            <person name="Nishikawa S."/>
            <person name="Nori F."/>
            <person name="Ohara O."/>
            <person name="Okazaki Y."/>
            <person name="Orlando V."/>
            <person name="Pang K.C."/>
            <person name="Pavan W.J."/>
            <person name="Pavesi G."/>
            <person name="Pesole G."/>
            <person name="Petrovsky N."/>
            <person name="Piazza S."/>
            <person name="Reed J."/>
            <person name="Reid J.F."/>
            <person name="Ring B.Z."/>
            <person name="Ringwald M."/>
            <person name="Rost B."/>
            <person name="Ruan Y."/>
            <person name="Salzberg S.L."/>
            <person name="Sandelin A."/>
            <person name="Schneider C."/>
            <person name="Schoenbach C."/>
            <person name="Sekiguchi K."/>
            <person name="Semple C.A."/>
            <person name="Seno S."/>
            <person name="Sessa L."/>
            <person name="Sheng Y."/>
            <person name="Shibata Y."/>
            <person name="Shimada H."/>
            <person name="Shimada K."/>
            <person name="Silva D."/>
            <person name="Sinclair B."/>
            <person name="Sperling S."/>
            <person name="Stupka E."/>
            <person name="Sugiura K."/>
            <person name="Sultana R."/>
            <person name="Takenaka Y."/>
            <person name="Taki K."/>
            <person name="Tammoja K."/>
            <person name="Tan S.L."/>
            <person name="Tang S."/>
            <person name="Taylor M.S."/>
            <person name="Tegner J."/>
            <person name="Teichmann S.A."/>
            <person name="Ueda H.R."/>
            <person name="van Nimwegen E."/>
            <person name="Verardo R."/>
            <person name="Wei C.L."/>
            <person name="Yagi K."/>
            <person name="Yamanishi H."/>
            <person name="Zabarovsky E."/>
            <person name="Zhu S."/>
            <person name="Zimmer A."/>
            <person name="Hide W."/>
            <person name="Bult C."/>
            <person name="Grimmond S.M."/>
            <person name="Teasdale R.D."/>
            <person name="Liu E.T."/>
            <person name="Brusic V."/>
            <person name="Quackenbush J."/>
            <person name="Wahlestedt C."/>
            <person name="Mattick J.S."/>
            <person name="Hume D.A."/>
            <person name="Kai C."/>
            <person name="Sasaki D."/>
            <person name="Tomaru Y."/>
            <person name="Fukuda S."/>
            <person name="Kanamori-Katayama M."/>
            <person name="Suzuki M."/>
            <person name="Aoki J."/>
            <person name="Arakawa T."/>
            <person name="Iida J."/>
            <person name="Imamura K."/>
            <person name="Itoh M."/>
            <person name="Kato T."/>
            <person name="Kawaji H."/>
            <person name="Kawagashira N."/>
            <person name="Kawashima T."/>
            <person name="Kojima M."/>
            <person name="Kondo S."/>
            <person name="Konno H."/>
            <person name="Nakano K."/>
            <person name="Ninomiya N."/>
            <person name="Nishio T."/>
            <person name="Okada M."/>
            <person name="Plessy C."/>
            <person name="Shibata K."/>
            <person name="Shiraki T."/>
            <person name="Suzuki S."/>
            <person name="Tagami M."/>
            <person name="Waki K."/>
            <person name="Watahiki A."/>
            <person name="Okamura-Oho Y."/>
            <person name="Suzuki H."/>
            <person name="Kawai J."/>
            <person name="Hayashizaki Y."/>
        </authorList>
    </citation>
    <scope>NUCLEOTIDE SEQUENCE [LARGE SCALE MRNA]</scope>
    <source>
        <strain>C57BL/6J</strain>
        <tissue>Placenta</tissue>
    </source>
</reference>
<reference key="3">
    <citation type="submission" date="2005-07" db="EMBL/GenBank/DDBJ databases">
        <title>Cloning of mouse full open reading frames in Gateway(R) system entry vector (pDONR201).</title>
        <authorList>
            <person name="Ebert L."/>
            <person name="Muenstermann E."/>
            <person name="Schatten R."/>
            <person name="Henze S."/>
            <person name="Bohn E."/>
            <person name="Mollenhauer J."/>
            <person name="Wiemann S."/>
            <person name="Schick M."/>
            <person name="Korn B."/>
        </authorList>
    </citation>
    <scope>NUCLEOTIDE SEQUENCE [LARGE SCALE MRNA]</scope>
</reference>
<reference key="4">
    <citation type="journal article" date="2009" name="PLoS Biol.">
        <title>Lineage-specific biology revealed by a finished genome assembly of the mouse.</title>
        <authorList>
            <person name="Church D.M."/>
            <person name="Goodstadt L."/>
            <person name="Hillier L.W."/>
            <person name="Zody M.C."/>
            <person name="Goldstein S."/>
            <person name="She X."/>
            <person name="Bult C.J."/>
            <person name="Agarwala R."/>
            <person name="Cherry J.L."/>
            <person name="DiCuccio M."/>
            <person name="Hlavina W."/>
            <person name="Kapustin Y."/>
            <person name="Meric P."/>
            <person name="Maglott D."/>
            <person name="Birtle Z."/>
            <person name="Marques A.C."/>
            <person name="Graves T."/>
            <person name="Zhou S."/>
            <person name="Teague B."/>
            <person name="Potamousis K."/>
            <person name="Churas C."/>
            <person name="Place M."/>
            <person name="Herschleb J."/>
            <person name="Runnheim R."/>
            <person name="Forrest D."/>
            <person name="Amos-Landgraf J."/>
            <person name="Schwartz D.C."/>
            <person name="Cheng Z."/>
            <person name="Lindblad-Toh K."/>
            <person name="Eichler E.E."/>
            <person name="Ponting C.P."/>
        </authorList>
    </citation>
    <scope>NUCLEOTIDE SEQUENCE [LARGE SCALE GENOMIC DNA]</scope>
    <source>
        <strain>C57BL/6J</strain>
    </source>
</reference>
<reference key="5">
    <citation type="journal article" date="2004" name="Genome Res.">
        <title>The status, quality, and expansion of the NIH full-length cDNA project: the Mammalian Gene Collection (MGC).</title>
        <authorList>
            <consortium name="The MGC Project Team"/>
        </authorList>
    </citation>
    <scope>NUCLEOTIDE SEQUENCE [LARGE SCALE MRNA]</scope>
    <source>
        <strain>C57BL/6J</strain>
        <strain>FVB/N</strain>
        <tissue>Mammary gland</tissue>
        <tissue>Mammary tumor</tissue>
    </source>
</reference>
<reference key="6">
    <citation type="journal article" date="2002" name="J. Biol. Chem.">
        <title>Identification and characterization of a novel endoplasmic reticulum (ER) DnaJ homologue, which stimulates ATPase activity of BiP in vitro and is induced by ER stress.</title>
        <authorList>
            <person name="Shen Y."/>
            <person name="Meunier L."/>
            <person name="Hendershot L.M."/>
        </authorList>
    </citation>
    <scope>FUNCTION</scope>
    <scope>SUBCELLULAR LOCATION</scope>
    <scope>INTERACTION WITH HSPA5</scope>
    <scope>MUTAGENESIS OF HIS-54</scope>
</reference>
<reference key="7">
    <citation type="journal article" date="2010" name="Cell">
        <title>A tissue-specific atlas of mouse protein phosphorylation and expression.</title>
        <authorList>
            <person name="Huttlin E.L."/>
            <person name="Jedrychowski M.P."/>
            <person name="Elias J.E."/>
            <person name="Goswami T."/>
            <person name="Rad R."/>
            <person name="Beausoleil S.A."/>
            <person name="Villen J."/>
            <person name="Haas W."/>
            <person name="Sowa M.E."/>
            <person name="Gygi S.P."/>
        </authorList>
    </citation>
    <scope>IDENTIFICATION BY MASS SPECTROMETRY [LARGE SCALE ANALYSIS]</scope>
    <source>
        <tissue>Liver</tissue>
        <tissue>Testis</tissue>
    </source>
</reference>
<reference key="8">
    <citation type="journal article" date="2012" name="J. Biol. Chem.">
        <title>ERdj4 protein is a soluble endoplasmic reticulum (ER) DnaJ family protein that interacts with ER-associated degradation machinery.</title>
        <authorList>
            <person name="Lai C.W."/>
            <person name="Otero J.H."/>
            <person name="Hendershot L.M."/>
            <person name="Snapp E."/>
        </authorList>
    </citation>
    <scope>FUNCTION</scope>
    <scope>SUBCELLULAR LOCATION</scope>
    <scope>INTERACTION WITH DERL1</scope>
</reference>
<reference key="9">
    <citation type="journal article" date="2014" name="Mol. Biol. Cell">
        <title>Deficiency of the BiP cochaperone ERdj4 causes constitutive endoplasmic reticulum stress and metabolic defects.</title>
        <authorList>
            <person name="Fritz J.M."/>
            <person name="Dong M."/>
            <person name="Apsley K.S."/>
            <person name="Martin E.P."/>
            <person name="Na C.L."/>
            <person name="Sitaraman S."/>
            <person name="Weaver T.E."/>
        </authorList>
    </citation>
    <scope>DISRUPTION PHENOTYPE</scope>
</reference>
<reference key="10">
    <citation type="journal article" date="2014" name="PLoS ONE">
        <title>The BiP cochaperone ERdj4 is required for B cell development and function.</title>
        <authorList>
            <person name="Fritz J.M."/>
            <person name="Weaver T.E."/>
        </authorList>
    </citation>
    <scope>FUNCTION</scope>
    <scope>DISRUPTION PHENOTYPE</scope>
</reference>
<reference key="11">
    <citation type="journal article" date="2016" name="Mol. Cell">
        <title>Members of the Hsp70 family recognize distinct types of sequences to execute er quality control.</title>
        <authorList>
            <person name="Behnke J."/>
            <person name="Mann M.J."/>
            <person name="Scruggs F.L."/>
            <person name="Feige M.J."/>
            <person name="Hendershot L.M."/>
        </authorList>
    </citation>
    <scope>DOMAIN</scope>
</reference>
<accession>Q9QYI6</accession>
<accession>Q5D0C3</accession>
<accession>Q9DAW1</accession>
<proteinExistence type="evidence at protein level"/>
<name>DNJB9_MOUSE</name>
<sequence>MATPQSVFVFAICILMITELILASKSYYDILGVPKSASERQIKKAFHKLAMKYHPDKNKSPDAEAKFREIAEAYETLSDANSRKEYDTIGHSAFTNGKGQRGNGSPFEQSFNFNFDDLFKDFNFFGQNQNTRSKKHFENHFHTRQDGSSRQRHHFQEFSFGGGLFDDMFEDMEKMFSFSGFDTTNRHTVQTENRFHGSSKHCRTVTQRRGNMVTTYTDCSGQ</sequence>
<feature type="signal peptide" evidence="3">
    <location>
        <begin position="1"/>
        <end position="23"/>
    </location>
</feature>
<feature type="chain" id="PRO_0000071032" description="DnaJ homolog subfamily B member 9">
    <location>
        <begin position="24"/>
        <end position="222"/>
    </location>
</feature>
<feature type="domain" description="J" evidence="4">
    <location>
        <begin position="26"/>
        <end position="90"/>
    </location>
</feature>
<feature type="region of interest" description="Divergent targeting domain" evidence="12">
    <location>
        <begin position="91"/>
        <end position="222"/>
    </location>
</feature>
<feature type="modified residue" description="Phosphoserine" evidence="2">
    <location>
        <position position="133"/>
    </location>
</feature>
<feature type="mutagenesis site" description="Abolishes ability to stimulate ATPase activity of HSPA5/BiP." evidence="5">
    <original>H</original>
    <variation>Q</variation>
    <location>
        <position position="54"/>
    </location>
</feature>
<feature type="sequence conflict" description="In Ref. 1; BAA88305." evidence="12" ref="1">
    <original>S</original>
    <variation>F</variation>
    <location>
        <position position="133"/>
    </location>
</feature>
<feature type="sequence conflict" description="In Ref. 1; BAA88305." evidence="12" ref="1">
    <original>S</original>
    <variation>F</variation>
    <location>
        <position position="148"/>
    </location>
</feature>
<protein>
    <recommendedName>
        <fullName evidence="12">DnaJ homolog subfamily B member 9</fullName>
    </recommendedName>
    <alternativeName>
        <fullName evidence="11">Endoplasmic reticulum DNA J domain-containing protein 4</fullName>
        <shortName evidence="11">ER-resident protein ERdj4</shortName>
        <shortName evidence="11">ERdj4</shortName>
    </alternativeName>
    <alternativeName>
        <fullName evidence="10">mDj7</fullName>
    </alternativeName>
</protein>
<comment type="function">
    <text evidence="1 5 6 8">Co-chaperone for Hsp70 protein HSPA5/BiP that acts as a key repressor of the ERN1/IRE1-mediated unfolded protein response (UPR) (By similarity). J domain-containing co-chaperones stimulate the ATPase activity of Hsp70 proteins and are required for efficient substrate recognition by Hsp70 proteins (PubMed:11836248). In the unstressed endoplasmic reticulum, interacts with the luminal region of ERN1/IRE1 and selectively recruits HSPA5/BiP: HSPA5/BiP disrupts the dimerization of the active ERN1/IRE1 luminal region, thereby inactivating ERN1/IRE1 (By similarity). Also involved in endoplasmic reticulum-associated degradation (ERAD) of misfolded proteins (PubMed:22267725). Required for survival of B-cell progenitors and normal antibody production (PubMed:25222125).</text>
</comment>
<comment type="subunit">
    <text evidence="1 5 6">Interacts with HSPA5/BiP; interaction is direct (PubMed:11836248). Interacts with ERN1/IRE1 (via the luminal region) (By similarity). Interacts with DERL1 (PubMed:22267725).</text>
</comment>
<comment type="subcellular location">
    <subcellularLocation>
        <location evidence="6 13">Endoplasmic reticulum lumen</location>
    </subcellularLocation>
</comment>
<comment type="domain">
    <text evidence="9">The J domain stimulates the ATPase activity of HSPA5/BiP, while the divergent targeting domain is required for efficient substrate recognition by HSPA5/BiP. The divergent targeting domain specifically recognizes and binds to aggregation-prone sequences.</text>
</comment>
<comment type="PTM">
    <text evidence="5">Not N-glycosylated.</text>
</comment>
<comment type="disruption phenotype">
    <text evidence="7 8">Perinatal death in approximately half of knockout mice (PubMed:24336520). Death is caused by fetal growth restriction, reduced hepatic glycogen stores and hypoglycemia (PubMed:24336520). Surviving adult mice display constitutive endoplasmic reticulum stress in multiple cells and tissues (PubMed:24336520). Elevated endoplasmic reticulum stress in pancreatic beta cells is associated with beta cell loss, hypoinsulinemia and glucose intolerance (PubMed:24336520) Conditional knockout mice lacking Dnajb9 in bone marrow show impaired hematopoiesis: the number of myeloid cells is increased, while the number of erythroid and B lymphoid cells is reduced (PubMed:25222125). B-cell defects cause decreased survival of B-cell precursors, including large and small pre-B, and immature B-cells (PubMed:25222125).</text>
</comment>
<comment type="caution">
    <text evidence="5 6">Was initially thought to be an integral membrane protein (PubMed:11836248). However, it was later shown that it is a soluble luminal protein localized in the endoplasmic reticulum lumen.</text>
</comment>